<accession>A7MU48</accession>
<organism>
    <name type="scientific">Vibrio campbellii (strain ATCC BAA-1116)</name>
    <dbReference type="NCBI Taxonomy" id="2902295"/>
    <lineage>
        <taxon>Bacteria</taxon>
        <taxon>Pseudomonadati</taxon>
        <taxon>Pseudomonadota</taxon>
        <taxon>Gammaproteobacteria</taxon>
        <taxon>Vibrionales</taxon>
        <taxon>Vibrionaceae</taxon>
        <taxon>Vibrio</taxon>
    </lineage>
</organism>
<name>ISCS_VIBC1</name>
<dbReference type="EC" id="2.8.1.7" evidence="1"/>
<dbReference type="EMBL" id="CP000789">
    <property type="protein sequence ID" value="ABU70048.1"/>
    <property type="molecule type" value="Genomic_DNA"/>
</dbReference>
<dbReference type="RefSeq" id="WP_012127087.1">
    <property type="nucleotide sequence ID" value="NC_009783.1"/>
</dbReference>
<dbReference type="SMR" id="A7MU48"/>
<dbReference type="KEGG" id="vha:VIBHAR_01055"/>
<dbReference type="PATRIC" id="fig|338187.25.peg.1573"/>
<dbReference type="UniPathway" id="UPA00266"/>
<dbReference type="Proteomes" id="UP000008152">
    <property type="component" value="Chromosome I"/>
</dbReference>
<dbReference type="GO" id="GO:1990221">
    <property type="term" value="C:L-cysteine desulfurase complex"/>
    <property type="evidence" value="ECO:0007669"/>
    <property type="project" value="UniProtKB-ARBA"/>
</dbReference>
<dbReference type="GO" id="GO:0051537">
    <property type="term" value="F:2 iron, 2 sulfur cluster binding"/>
    <property type="evidence" value="ECO:0007669"/>
    <property type="project" value="UniProtKB-UniRule"/>
</dbReference>
<dbReference type="GO" id="GO:0031071">
    <property type="term" value="F:cysteine desulfurase activity"/>
    <property type="evidence" value="ECO:0007669"/>
    <property type="project" value="UniProtKB-UniRule"/>
</dbReference>
<dbReference type="GO" id="GO:0046872">
    <property type="term" value="F:metal ion binding"/>
    <property type="evidence" value="ECO:0007669"/>
    <property type="project" value="UniProtKB-KW"/>
</dbReference>
<dbReference type="GO" id="GO:0030170">
    <property type="term" value="F:pyridoxal phosphate binding"/>
    <property type="evidence" value="ECO:0007669"/>
    <property type="project" value="UniProtKB-UniRule"/>
</dbReference>
<dbReference type="GO" id="GO:0044571">
    <property type="term" value="P:[2Fe-2S] cluster assembly"/>
    <property type="evidence" value="ECO:0007669"/>
    <property type="project" value="UniProtKB-UniRule"/>
</dbReference>
<dbReference type="FunFam" id="3.40.640.10:FF:000003">
    <property type="entry name" value="Cysteine desulfurase IscS"/>
    <property type="match status" value="1"/>
</dbReference>
<dbReference type="FunFam" id="3.90.1150.10:FF:000002">
    <property type="entry name" value="Cysteine desulfurase IscS"/>
    <property type="match status" value="1"/>
</dbReference>
<dbReference type="Gene3D" id="3.90.1150.10">
    <property type="entry name" value="Aspartate Aminotransferase, domain 1"/>
    <property type="match status" value="1"/>
</dbReference>
<dbReference type="Gene3D" id="3.40.640.10">
    <property type="entry name" value="Type I PLP-dependent aspartate aminotransferase-like (Major domain)"/>
    <property type="match status" value="1"/>
</dbReference>
<dbReference type="HAMAP" id="MF_00331">
    <property type="entry name" value="Cys_desulf_IscS"/>
    <property type="match status" value="1"/>
</dbReference>
<dbReference type="InterPro" id="IPR000192">
    <property type="entry name" value="Aminotrans_V_dom"/>
</dbReference>
<dbReference type="InterPro" id="IPR020578">
    <property type="entry name" value="Aminotrans_V_PyrdxlP_BS"/>
</dbReference>
<dbReference type="InterPro" id="IPR010240">
    <property type="entry name" value="Cys_deSase_IscS"/>
</dbReference>
<dbReference type="InterPro" id="IPR016454">
    <property type="entry name" value="Cysteine_dSase"/>
</dbReference>
<dbReference type="InterPro" id="IPR015424">
    <property type="entry name" value="PyrdxlP-dep_Trfase"/>
</dbReference>
<dbReference type="InterPro" id="IPR015421">
    <property type="entry name" value="PyrdxlP-dep_Trfase_major"/>
</dbReference>
<dbReference type="InterPro" id="IPR015422">
    <property type="entry name" value="PyrdxlP-dep_Trfase_small"/>
</dbReference>
<dbReference type="NCBIfam" id="TIGR02006">
    <property type="entry name" value="IscS"/>
    <property type="match status" value="1"/>
</dbReference>
<dbReference type="NCBIfam" id="NF002806">
    <property type="entry name" value="PRK02948.1"/>
    <property type="match status" value="1"/>
</dbReference>
<dbReference type="NCBIfam" id="NF010611">
    <property type="entry name" value="PRK14012.1"/>
    <property type="match status" value="1"/>
</dbReference>
<dbReference type="PANTHER" id="PTHR11601:SF34">
    <property type="entry name" value="CYSTEINE DESULFURASE"/>
    <property type="match status" value="1"/>
</dbReference>
<dbReference type="PANTHER" id="PTHR11601">
    <property type="entry name" value="CYSTEINE DESULFURYLASE FAMILY MEMBER"/>
    <property type="match status" value="1"/>
</dbReference>
<dbReference type="Pfam" id="PF00266">
    <property type="entry name" value="Aminotran_5"/>
    <property type="match status" value="1"/>
</dbReference>
<dbReference type="PIRSF" id="PIRSF005572">
    <property type="entry name" value="NifS"/>
    <property type="match status" value="1"/>
</dbReference>
<dbReference type="SUPFAM" id="SSF53383">
    <property type="entry name" value="PLP-dependent transferases"/>
    <property type="match status" value="1"/>
</dbReference>
<dbReference type="PROSITE" id="PS00595">
    <property type="entry name" value="AA_TRANSFER_CLASS_5"/>
    <property type="match status" value="1"/>
</dbReference>
<reference key="1">
    <citation type="submission" date="2007-08" db="EMBL/GenBank/DDBJ databases">
        <authorList>
            <consortium name="The Vibrio harveyi Genome Sequencing Project"/>
            <person name="Bassler B."/>
            <person name="Clifton S.W."/>
            <person name="Fulton L."/>
            <person name="Delehaunty K."/>
            <person name="Fronick C."/>
            <person name="Harrison M."/>
            <person name="Markivic C."/>
            <person name="Fulton R."/>
            <person name="Tin-Wollam A.-M."/>
            <person name="Shah N."/>
            <person name="Pepin K."/>
            <person name="Nash W."/>
            <person name="Thiruvilangam P."/>
            <person name="Bhonagiri V."/>
            <person name="Waters C."/>
            <person name="Tu K.C."/>
            <person name="Irgon J."/>
            <person name="Wilson R.K."/>
        </authorList>
    </citation>
    <scope>NUCLEOTIDE SEQUENCE [LARGE SCALE GENOMIC DNA]</scope>
    <source>
        <strain>ATCC BAA-1116 / BB120</strain>
    </source>
</reference>
<comment type="function">
    <text evidence="1">Master enzyme that delivers sulfur to a number of partners involved in Fe-S cluster assembly, tRNA modification or cofactor biosynthesis. Catalyzes the removal of elemental sulfur atoms from cysteine to produce alanine. Functions as a sulfur delivery protein for Fe-S cluster synthesis onto IscU, an Fe-S scaffold assembly protein, as well as other S acceptor proteins.</text>
</comment>
<comment type="catalytic activity">
    <reaction evidence="1">
        <text>(sulfur carrier)-H + L-cysteine = (sulfur carrier)-SH + L-alanine</text>
        <dbReference type="Rhea" id="RHEA:43892"/>
        <dbReference type="Rhea" id="RHEA-COMP:14737"/>
        <dbReference type="Rhea" id="RHEA-COMP:14739"/>
        <dbReference type="ChEBI" id="CHEBI:29917"/>
        <dbReference type="ChEBI" id="CHEBI:35235"/>
        <dbReference type="ChEBI" id="CHEBI:57972"/>
        <dbReference type="ChEBI" id="CHEBI:64428"/>
        <dbReference type="EC" id="2.8.1.7"/>
    </reaction>
</comment>
<comment type="cofactor">
    <cofactor evidence="1">
        <name>pyridoxal 5'-phosphate</name>
        <dbReference type="ChEBI" id="CHEBI:597326"/>
    </cofactor>
</comment>
<comment type="pathway">
    <text evidence="1">Cofactor biosynthesis; iron-sulfur cluster biosynthesis.</text>
</comment>
<comment type="subunit">
    <text evidence="1">Homodimer. Forms a heterotetramer with IscU, interacts with other sulfur acceptors.</text>
</comment>
<comment type="subcellular location">
    <subcellularLocation>
        <location evidence="1">Cytoplasm</location>
    </subcellularLocation>
</comment>
<comment type="similarity">
    <text evidence="1">Belongs to the class-V pyridoxal-phosphate-dependent aminotransferase family. NifS/IscS subfamily.</text>
</comment>
<gene>
    <name evidence="1" type="primary">iscS</name>
    <name type="ordered locus">VIBHAR_01055</name>
</gene>
<sequence>MKLPIYLDYSATCPVDPRVAEKMVQYMTMDGTFGNPASRSHRYGWQAEEAVDTAREQIADLINADPREIVFTSGATESDNLAIKGAAHFYSKKGKHVITCKTEHKAVLDPCRQLEREGFEVTYLEPESNGLVDLSKLQAAMREDTVLVSIMHVNNEIGVIQDITAIGDLCRERKIVFHVDAAQSAGKLPIDVQEMKVDLISFSAHKAYGPKGIGALYVRRKPRIRLEAQMHGGGHERGFRSGTLPTHQIVGMGEAFRVAKEDMQKDYDHALALRNRLLDGVKDLEAVTVNGDLEQRVPHNLNVSFAFVEGESLLMSLKDLAVSSGSACTSASLEPSYVLRALGLDDELAHSSVRFSFGRFTTEAEIDYAIEQIRVAVTKLRDMSPLWDMYKEGIDLSTVEWAHH</sequence>
<evidence type="ECO:0000255" key="1">
    <source>
        <dbReference type="HAMAP-Rule" id="MF_00331"/>
    </source>
</evidence>
<protein>
    <recommendedName>
        <fullName evidence="1">Cysteine desulfurase IscS</fullName>
        <ecNumber evidence="1">2.8.1.7</ecNumber>
    </recommendedName>
</protein>
<proteinExistence type="inferred from homology"/>
<keyword id="KW-0001">2Fe-2S</keyword>
<keyword id="KW-0963">Cytoplasm</keyword>
<keyword id="KW-0408">Iron</keyword>
<keyword id="KW-0411">Iron-sulfur</keyword>
<keyword id="KW-0479">Metal-binding</keyword>
<keyword id="KW-0663">Pyridoxal phosphate</keyword>
<keyword id="KW-0808">Transferase</keyword>
<feature type="chain" id="PRO_1000019454" description="Cysteine desulfurase IscS">
    <location>
        <begin position="1"/>
        <end position="404"/>
    </location>
</feature>
<feature type="active site" description="Cysteine persulfide intermediate" evidence="1">
    <location>
        <position position="328"/>
    </location>
</feature>
<feature type="binding site" evidence="1">
    <location>
        <begin position="75"/>
        <end position="76"/>
    </location>
    <ligand>
        <name>pyridoxal 5'-phosphate</name>
        <dbReference type="ChEBI" id="CHEBI:597326"/>
    </ligand>
</feature>
<feature type="binding site" evidence="1">
    <location>
        <position position="155"/>
    </location>
    <ligand>
        <name>pyridoxal 5'-phosphate</name>
        <dbReference type="ChEBI" id="CHEBI:597326"/>
    </ligand>
</feature>
<feature type="binding site" evidence="1">
    <location>
        <position position="183"/>
    </location>
    <ligand>
        <name>pyridoxal 5'-phosphate</name>
        <dbReference type="ChEBI" id="CHEBI:597326"/>
    </ligand>
</feature>
<feature type="binding site" evidence="1">
    <location>
        <begin position="203"/>
        <end position="205"/>
    </location>
    <ligand>
        <name>pyridoxal 5'-phosphate</name>
        <dbReference type="ChEBI" id="CHEBI:597326"/>
    </ligand>
</feature>
<feature type="binding site" evidence="1">
    <location>
        <position position="243"/>
    </location>
    <ligand>
        <name>pyridoxal 5'-phosphate</name>
        <dbReference type="ChEBI" id="CHEBI:597326"/>
    </ligand>
</feature>
<feature type="binding site" description="via persulfide group" evidence="1">
    <location>
        <position position="328"/>
    </location>
    <ligand>
        <name>[2Fe-2S] cluster</name>
        <dbReference type="ChEBI" id="CHEBI:190135"/>
        <note>ligand shared with IscU</note>
    </ligand>
</feature>
<feature type="modified residue" description="N6-(pyridoxal phosphate)lysine" evidence="1">
    <location>
        <position position="206"/>
    </location>
</feature>